<evidence type="ECO:0000255" key="1">
    <source>
        <dbReference type="HAMAP-Rule" id="MF_00344"/>
    </source>
</evidence>
<accession>Q9CNX8</accession>
<reference key="1">
    <citation type="journal article" date="2001" name="Proc. Natl. Acad. Sci. U.S.A.">
        <title>Complete genomic sequence of Pasteurella multocida Pm70.</title>
        <authorList>
            <person name="May B.J."/>
            <person name="Zhang Q."/>
            <person name="Li L.L."/>
            <person name="Paustian M.L."/>
            <person name="Whittam T.S."/>
            <person name="Kapur V."/>
        </authorList>
    </citation>
    <scope>NUCLEOTIDE SEQUENCE [LARGE SCALE GENOMIC DNA]</scope>
    <source>
        <strain>Pm70</strain>
    </source>
</reference>
<gene>
    <name evidence="1" type="primary">guaA</name>
    <name type="ordered locus">PM0293</name>
</gene>
<name>GUAA_PASMU</name>
<feature type="chain" id="PRO_0000140155" description="GMP synthase [glutamine-hydrolyzing]">
    <location>
        <begin position="1"/>
        <end position="523"/>
    </location>
</feature>
<feature type="domain" description="Glutamine amidotransferase type-1" evidence="1">
    <location>
        <begin position="8"/>
        <end position="205"/>
    </location>
</feature>
<feature type="domain" description="GMPS ATP-PPase" evidence="1">
    <location>
        <begin position="206"/>
        <end position="398"/>
    </location>
</feature>
<feature type="active site" description="Nucleophile" evidence="1">
    <location>
        <position position="85"/>
    </location>
</feature>
<feature type="active site" evidence="1">
    <location>
        <position position="179"/>
    </location>
</feature>
<feature type="active site" evidence="1">
    <location>
        <position position="181"/>
    </location>
</feature>
<feature type="binding site" evidence="1">
    <location>
        <begin position="233"/>
        <end position="239"/>
    </location>
    <ligand>
        <name>ATP</name>
        <dbReference type="ChEBI" id="CHEBI:30616"/>
    </ligand>
</feature>
<comment type="function">
    <text evidence="1">Catalyzes the synthesis of GMP from XMP.</text>
</comment>
<comment type="catalytic activity">
    <reaction evidence="1">
        <text>XMP + L-glutamine + ATP + H2O = GMP + L-glutamate + AMP + diphosphate + 2 H(+)</text>
        <dbReference type="Rhea" id="RHEA:11680"/>
        <dbReference type="ChEBI" id="CHEBI:15377"/>
        <dbReference type="ChEBI" id="CHEBI:15378"/>
        <dbReference type="ChEBI" id="CHEBI:29985"/>
        <dbReference type="ChEBI" id="CHEBI:30616"/>
        <dbReference type="ChEBI" id="CHEBI:33019"/>
        <dbReference type="ChEBI" id="CHEBI:57464"/>
        <dbReference type="ChEBI" id="CHEBI:58115"/>
        <dbReference type="ChEBI" id="CHEBI:58359"/>
        <dbReference type="ChEBI" id="CHEBI:456215"/>
        <dbReference type="EC" id="6.3.5.2"/>
    </reaction>
</comment>
<comment type="pathway">
    <text evidence="1">Purine metabolism; GMP biosynthesis; GMP from XMP (L-Gln route): step 1/1.</text>
</comment>
<comment type="subunit">
    <text evidence="1">Homodimer.</text>
</comment>
<proteinExistence type="inferred from homology"/>
<organism>
    <name type="scientific">Pasteurella multocida (strain Pm70)</name>
    <dbReference type="NCBI Taxonomy" id="272843"/>
    <lineage>
        <taxon>Bacteria</taxon>
        <taxon>Pseudomonadati</taxon>
        <taxon>Pseudomonadota</taxon>
        <taxon>Gammaproteobacteria</taxon>
        <taxon>Pasteurellales</taxon>
        <taxon>Pasteurellaceae</taxon>
        <taxon>Pasteurella</taxon>
    </lineage>
</organism>
<sequence length="523" mass="58230">MNNIHNHKILILDFGSQYTQLIARRVREIGVYCELWAWDVSEADIREFNPTGIILSGGPESTTEENSPRAPEYVFNAGVPVLGICYGMQTMAMQLGGLTETSTHREFGYASVNLKAADALFAQLNDDVTSSQPKLDVWMSHGDKVTRLPDHFQVTAMTSTCPIAAMSDERRRFYGVQFHPEVTHTKSGLELLTNFVVKICGCERNWTPENIIEDAVARLKAQVGDDEVILGLSGGVDSSVTALLLHRAIGKNLHCVFVDNGLLRLNEAEQVMEMFGDKFGLNIIHVKAEDRFLDALKGIDEPEAKRKMIGKVFVDVFDDESKKLTSVKWLAQGTIYPDVIESAASKTGKAHVIKSHHNVGGLPDYMKLGLVEPLRELFKDEVRKIGLALGLPAEMLNRHPFPGPGLGVRVLGEIKKEYCDLVRLADAIFMEELHASGWYYKVSQAFTVFLPVKSVGVMGDGRKYDWVVSLRAVETIDFMTAHWAHLPYDLLGKISNRIINEVNGISRVVYDVSGKPPATIEWE</sequence>
<protein>
    <recommendedName>
        <fullName evidence="1">GMP synthase [glutamine-hydrolyzing]</fullName>
        <ecNumber evidence="1">6.3.5.2</ecNumber>
    </recommendedName>
    <alternativeName>
        <fullName evidence="1">GMP synthetase</fullName>
    </alternativeName>
    <alternativeName>
        <fullName evidence="1">Glutamine amidotransferase</fullName>
    </alternativeName>
</protein>
<keyword id="KW-0067">ATP-binding</keyword>
<keyword id="KW-0315">Glutamine amidotransferase</keyword>
<keyword id="KW-0332">GMP biosynthesis</keyword>
<keyword id="KW-0436">Ligase</keyword>
<keyword id="KW-0547">Nucleotide-binding</keyword>
<keyword id="KW-0658">Purine biosynthesis</keyword>
<keyword id="KW-1185">Reference proteome</keyword>
<dbReference type="EC" id="6.3.5.2" evidence="1"/>
<dbReference type="EMBL" id="AE004439">
    <property type="protein sequence ID" value="AAK02377.1"/>
    <property type="molecule type" value="Genomic_DNA"/>
</dbReference>
<dbReference type="RefSeq" id="WP_010906568.1">
    <property type="nucleotide sequence ID" value="NC_002663.1"/>
</dbReference>
<dbReference type="SMR" id="Q9CNX8"/>
<dbReference type="STRING" id="272843.PM0293"/>
<dbReference type="MEROPS" id="C26.957"/>
<dbReference type="EnsemblBacteria" id="AAK02377">
    <property type="protein sequence ID" value="AAK02377"/>
    <property type="gene ID" value="PM0293"/>
</dbReference>
<dbReference type="KEGG" id="pmu:PM0293"/>
<dbReference type="PATRIC" id="fig|272843.6.peg.303"/>
<dbReference type="HOGENOM" id="CLU_014340_0_5_6"/>
<dbReference type="OrthoDB" id="9802219at2"/>
<dbReference type="UniPathway" id="UPA00189">
    <property type="reaction ID" value="UER00296"/>
</dbReference>
<dbReference type="Proteomes" id="UP000000809">
    <property type="component" value="Chromosome"/>
</dbReference>
<dbReference type="GO" id="GO:0005829">
    <property type="term" value="C:cytosol"/>
    <property type="evidence" value="ECO:0007669"/>
    <property type="project" value="TreeGrafter"/>
</dbReference>
<dbReference type="GO" id="GO:0005524">
    <property type="term" value="F:ATP binding"/>
    <property type="evidence" value="ECO:0007669"/>
    <property type="project" value="UniProtKB-UniRule"/>
</dbReference>
<dbReference type="GO" id="GO:0003921">
    <property type="term" value="F:GMP synthase activity"/>
    <property type="evidence" value="ECO:0007669"/>
    <property type="project" value="InterPro"/>
</dbReference>
<dbReference type="CDD" id="cd01742">
    <property type="entry name" value="GATase1_GMP_Synthase"/>
    <property type="match status" value="1"/>
</dbReference>
<dbReference type="CDD" id="cd01997">
    <property type="entry name" value="GMP_synthase_C"/>
    <property type="match status" value="1"/>
</dbReference>
<dbReference type="FunFam" id="3.30.300.10:FF:000002">
    <property type="entry name" value="GMP synthase [glutamine-hydrolyzing]"/>
    <property type="match status" value="1"/>
</dbReference>
<dbReference type="FunFam" id="3.40.50.620:FF:000001">
    <property type="entry name" value="GMP synthase [glutamine-hydrolyzing]"/>
    <property type="match status" value="1"/>
</dbReference>
<dbReference type="FunFam" id="3.40.50.880:FF:000001">
    <property type="entry name" value="GMP synthase [glutamine-hydrolyzing]"/>
    <property type="match status" value="1"/>
</dbReference>
<dbReference type="Gene3D" id="3.30.300.10">
    <property type="match status" value="1"/>
</dbReference>
<dbReference type="Gene3D" id="3.40.50.880">
    <property type="match status" value="1"/>
</dbReference>
<dbReference type="Gene3D" id="3.40.50.620">
    <property type="entry name" value="HUPs"/>
    <property type="match status" value="1"/>
</dbReference>
<dbReference type="HAMAP" id="MF_00344">
    <property type="entry name" value="GMP_synthase"/>
    <property type="match status" value="1"/>
</dbReference>
<dbReference type="InterPro" id="IPR029062">
    <property type="entry name" value="Class_I_gatase-like"/>
</dbReference>
<dbReference type="InterPro" id="IPR017926">
    <property type="entry name" value="GATASE"/>
</dbReference>
<dbReference type="InterPro" id="IPR001674">
    <property type="entry name" value="GMP_synth_C"/>
</dbReference>
<dbReference type="InterPro" id="IPR004739">
    <property type="entry name" value="GMP_synth_GATase"/>
</dbReference>
<dbReference type="InterPro" id="IPR022955">
    <property type="entry name" value="GMP_synthase"/>
</dbReference>
<dbReference type="InterPro" id="IPR025777">
    <property type="entry name" value="GMPS_ATP_PPase_dom"/>
</dbReference>
<dbReference type="InterPro" id="IPR022310">
    <property type="entry name" value="NAD/GMP_synthase"/>
</dbReference>
<dbReference type="InterPro" id="IPR014729">
    <property type="entry name" value="Rossmann-like_a/b/a_fold"/>
</dbReference>
<dbReference type="NCBIfam" id="TIGR00884">
    <property type="entry name" value="guaA_Cterm"/>
    <property type="match status" value="1"/>
</dbReference>
<dbReference type="NCBIfam" id="TIGR00888">
    <property type="entry name" value="guaA_Nterm"/>
    <property type="match status" value="1"/>
</dbReference>
<dbReference type="NCBIfam" id="NF000848">
    <property type="entry name" value="PRK00074.1"/>
    <property type="match status" value="1"/>
</dbReference>
<dbReference type="PANTHER" id="PTHR11922:SF2">
    <property type="entry name" value="GMP SYNTHASE [GLUTAMINE-HYDROLYZING]"/>
    <property type="match status" value="1"/>
</dbReference>
<dbReference type="PANTHER" id="PTHR11922">
    <property type="entry name" value="GMP SYNTHASE-RELATED"/>
    <property type="match status" value="1"/>
</dbReference>
<dbReference type="Pfam" id="PF00117">
    <property type="entry name" value="GATase"/>
    <property type="match status" value="1"/>
</dbReference>
<dbReference type="Pfam" id="PF00958">
    <property type="entry name" value="GMP_synt_C"/>
    <property type="match status" value="1"/>
</dbReference>
<dbReference type="Pfam" id="PF02540">
    <property type="entry name" value="NAD_synthase"/>
    <property type="match status" value="1"/>
</dbReference>
<dbReference type="PRINTS" id="PR00097">
    <property type="entry name" value="ANTSNTHASEII"/>
</dbReference>
<dbReference type="PRINTS" id="PR00099">
    <property type="entry name" value="CPSGATASE"/>
</dbReference>
<dbReference type="PRINTS" id="PR00096">
    <property type="entry name" value="GATASE"/>
</dbReference>
<dbReference type="SUPFAM" id="SSF52402">
    <property type="entry name" value="Adenine nucleotide alpha hydrolases-like"/>
    <property type="match status" value="1"/>
</dbReference>
<dbReference type="SUPFAM" id="SSF52317">
    <property type="entry name" value="Class I glutamine amidotransferase-like"/>
    <property type="match status" value="1"/>
</dbReference>
<dbReference type="SUPFAM" id="SSF54810">
    <property type="entry name" value="GMP synthetase C-terminal dimerisation domain"/>
    <property type="match status" value="1"/>
</dbReference>
<dbReference type="PROSITE" id="PS51273">
    <property type="entry name" value="GATASE_TYPE_1"/>
    <property type="match status" value="1"/>
</dbReference>
<dbReference type="PROSITE" id="PS51553">
    <property type="entry name" value="GMPS_ATP_PPASE"/>
    <property type="match status" value="1"/>
</dbReference>